<reference key="1">
    <citation type="journal article" date="2008" name="Mol. Biol. Evol.">
        <title>Genome evolution of Wolbachia strain wPip from the Culex pipiens group.</title>
        <authorList>
            <person name="Klasson L."/>
            <person name="Walker T."/>
            <person name="Sebaihia M."/>
            <person name="Sanders M.J."/>
            <person name="Quail M.A."/>
            <person name="Lord A."/>
            <person name="Sanders S."/>
            <person name="Earl J."/>
            <person name="O'Neill S.L."/>
            <person name="Thomson N."/>
            <person name="Sinkins S.P."/>
            <person name="Parkhill J."/>
        </authorList>
    </citation>
    <scope>NUCLEOTIDE SEQUENCE [LARGE SCALE GENOMIC DNA]</scope>
    <source>
        <strain>wPip</strain>
    </source>
</reference>
<proteinExistence type="inferred from homology"/>
<dbReference type="EMBL" id="AM999887">
    <property type="protein sequence ID" value="CAQ55280.1"/>
    <property type="molecule type" value="Genomic_DNA"/>
</dbReference>
<dbReference type="RefSeq" id="WP_007302538.1">
    <property type="nucleotide sequence ID" value="NC_010981.1"/>
</dbReference>
<dbReference type="SMR" id="B3CN32"/>
<dbReference type="KEGG" id="wpi:WP1172"/>
<dbReference type="eggNOG" id="COG0092">
    <property type="taxonomic scope" value="Bacteria"/>
</dbReference>
<dbReference type="HOGENOM" id="CLU_058591_0_2_5"/>
<dbReference type="Proteomes" id="UP000008814">
    <property type="component" value="Chromosome"/>
</dbReference>
<dbReference type="GO" id="GO:0022627">
    <property type="term" value="C:cytosolic small ribosomal subunit"/>
    <property type="evidence" value="ECO:0007669"/>
    <property type="project" value="TreeGrafter"/>
</dbReference>
<dbReference type="GO" id="GO:0003729">
    <property type="term" value="F:mRNA binding"/>
    <property type="evidence" value="ECO:0007669"/>
    <property type="project" value="UniProtKB-UniRule"/>
</dbReference>
<dbReference type="GO" id="GO:0019843">
    <property type="term" value="F:rRNA binding"/>
    <property type="evidence" value="ECO:0007669"/>
    <property type="project" value="UniProtKB-UniRule"/>
</dbReference>
<dbReference type="GO" id="GO:0003735">
    <property type="term" value="F:structural constituent of ribosome"/>
    <property type="evidence" value="ECO:0007669"/>
    <property type="project" value="InterPro"/>
</dbReference>
<dbReference type="GO" id="GO:0006412">
    <property type="term" value="P:translation"/>
    <property type="evidence" value="ECO:0007669"/>
    <property type="project" value="UniProtKB-UniRule"/>
</dbReference>
<dbReference type="CDD" id="cd02412">
    <property type="entry name" value="KH-II_30S_S3"/>
    <property type="match status" value="1"/>
</dbReference>
<dbReference type="FunFam" id="3.30.300.20:FF:000001">
    <property type="entry name" value="30S ribosomal protein S3"/>
    <property type="match status" value="1"/>
</dbReference>
<dbReference type="Gene3D" id="3.30.300.20">
    <property type="match status" value="1"/>
</dbReference>
<dbReference type="Gene3D" id="3.30.1140.32">
    <property type="entry name" value="Ribosomal protein S3, C-terminal domain"/>
    <property type="match status" value="1"/>
</dbReference>
<dbReference type="HAMAP" id="MF_01309_B">
    <property type="entry name" value="Ribosomal_uS3_B"/>
    <property type="match status" value="1"/>
</dbReference>
<dbReference type="InterPro" id="IPR015946">
    <property type="entry name" value="KH_dom-like_a/b"/>
</dbReference>
<dbReference type="InterPro" id="IPR004044">
    <property type="entry name" value="KH_dom_type_2"/>
</dbReference>
<dbReference type="InterPro" id="IPR009019">
    <property type="entry name" value="KH_sf_prok-type"/>
</dbReference>
<dbReference type="InterPro" id="IPR036419">
    <property type="entry name" value="Ribosomal_S3_C_sf"/>
</dbReference>
<dbReference type="InterPro" id="IPR005704">
    <property type="entry name" value="Ribosomal_uS3_bac-typ"/>
</dbReference>
<dbReference type="InterPro" id="IPR001351">
    <property type="entry name" value="Ribosomal_uS3_C"/>
</dbReference>
<dbReference type="InterPro" id="IPR018280">
    <property type="entry name" value="Ribosomal_uS3_CS"/>
</dbReference>
<dbReference type="NCBIfam" id="TIGR01009">
    <property type="entry name" value="rpsC_bact"/>
    <property type="match status" value="1"/>
</dbReference>
<dbReference type="PANTHER" id="PTHR11760">
    <property type="entry name" value="30S/40S RIBOSOMAL PROTEIN S3"/>
    <property type="match status" value="1"/>
</dbReference>
<dbReference type="PANTHER" id="PTHR11760:SF19">
    <property type="entry name" value="SMALL RIBOSOMAL SUBUNIT PROTEIN US3C"/>
    <property type="match status" value="1"/>
</dbReference>
<dbReference type="Pfam" id="PF07650">
    <property type="entry name" value="KH_2"/>
    <property type="match status" value="1"/>
</dbReference>
<dbReference type="Pfam" id="PF00189">
    <property type="entry name" value="Ribosomal_S3_C"/>
    <property type="match status" value="1"/>
</dbReference>
<dbReference type="SUPFAM" id="SSF54814">
    <property type="entry name" value="Prokaryotic type KH domain (KH-domain type II)"/>
    <property type="match status" value="1"/>
</dbReference>
<dbReference type="SUPFAM" id="SSF54821">
    <property type="entry name" value="Ribosomal protein S3 C-terminal domain"/>
    <property type="match status" value="1"/>
</dbReference>
<dbReference type="PROSITE" id="PS50823">
    <property type="entry name" value="KH_TYPE_2"/>
    <property type="match status" value="1"/>
</dbReference>
<dbReference type="PROSITE" id="PS00548">
    <property type="entry name" value="RIBOSOMAL_S3"/>
    <property type="match status" value="1"/>
</dbReference>
<comment type="function">
    <text evidence="1">Binds the lower part of the 30S subunit head. Binds mRNA in the 70S ribosome, positioning it for translation.</text>
</comment>
<comment type="subunit">
    <text evidence="1">Part of the 30S ribosomal subunit. Forms a tight complex with proteins S10 and S14.</text>
</comment>
<comment type="similarity">
    <text evidence="1">Belongs to the universal ribosomal protein uS3 family.</text>
</comment>
<evidence type="ECO:0000255" key="1">
    <source>
        <dbReference type="HAMAP-Rule" id="MF_01309"/>
    </source>
</evidence>
<evidence type="ECO:0000305" key="2"/>
<name>RS3_WOLPP</name>
<accession>B3CN32</accession>
<keyword id="KW-0687">Ribonucleoprotein</keyword>
<keyword id="KW-0689">Ribosomal protein</keyword>
<keyword id="KW-0694">RNA-binding</keyword>
<keyword id="KW-0699">rRNA-binding</keyword>
<organism>
    <name type="scientific">Wolbachia pipientis subsp. Culex pipiens (strain wPip)</name>
    <dbReference type="NCBI Taxonomy" id="570417"/>
    <lineage>
        <taxon>Bacteria</taxon>
        <taxon>Pseudomonadati</taxon>
        <taxon>Pseudomonadota</taxon>
        <taxon>Alphaproteobacteria</taxon>
        <taxon>Rickettsiales</taxon>
        <taxon>Anaplasmataceae</taxon>
        <taxon>Wolbachieae</taxon>
        <taxon>Wolbachia</taxon>
    </lineage>
</organism>
<feature type="chain" id="PRO_1000141033" description="Small ribosomal subunit protein uS3">
    <location>
        <begin position="1"/>
        <end position="206"/>
    </location>
</feature>
<feature type="domain" description="KH type-2" evidence="1">
    <location>
        <begin position="39"/>
        <end position="107"/>
    </location>
</feature>
<sequence>MGQKVNPKVFRLQINSNTWDSVWCATDDYKQKLHQDLFIRSYINESFKHAGISKVTVERTVTLVSVIIHSSKPGVIIGKKGLDVEKIKQKIAKKVESSVEVNVVGVKKSEIDAVLISRSITHQLEKRISCRRAMKKAIQNCLKMGAEGIKVSCSGRLGGAEIARTEWYKEGRLPLHTLRANIDYAFCEAKTICGIIGVKVWVYVGS</sequence>
<gene>
    <name evidence="1" type="primary">rpsC</name>
    <name type="ordered locus">WP1172</name>
</gene>
<protein>
    <recommendedName>
        <fullName evidence="1">Small ribosomal subunit protein uS3</fullName>
    </recommendedName>
    <alternativeName>
        <fullName evidence="2">30S ribosomal protein S3</fullName>
    </alternativeName>
</protein>